<organism>
    <name type="scientific">Bos taurus</name>
    <name type="common">Bovine</name>
    <dbReference type="NCBI Taxonomy" id="9913"/>
    <lineage>
        <taxon>Eukaryota</taxon>
        <taxon>Metazoa</taxon>
        <taxon>Chordata</taxon>
        <taxon>Craniata</taxon>
        <taxon>Vertebrata</taxon>
        <taxon>Euteleostomi</taxon>
        <taxon>Mammalia</taxon>
        <taxon>Eutheria</taxon>
        <taxon>Laurasiatheria</taxon>
        <taxon>Artiodactyla</taxon>
        <taxon>Ruminantia</taxon>
        <taxon>Pecora</taxon>
        <taxon>Bovidae</taxon>
        <taxon>Bovinae</taxon>
        <taxon>Bos</taxon>
    </lineage>
</organism>
<feature type="chain" id="PRO_0000271432" description="Serine/threonine-protein kinase VRK1">
    <location>
        <begin position="1"/>
        <end position="396"/>
    </location>
</feature>
<feature type="domain" description="Protein kinase" evidence="3">
    <location>
        <begin position="37"/>
        <end position="317"/>
    </location>
</feature>
<feature type="region of interest" description="Disordered" evidence="5">
    <location>
        <begin position="352"/>
        <end position="396"/>
    </location>
</feature>
<feature type="region of interest" description="Required for interaction with the nucleosome" evidence="2">
    <location>
        <begin position="387"/>
        <end position="393"/>
    </location>
</feature>
<feature type="compositionally biased region" description="Acidic residues" evidence="5">
    <location>
        <begin position="364"/>
        <end position="374"/>
    </location>
</feature>
<feature type="active site" description="Proton acceptor" evidence="3 4">
    <location>
        <position position="177"/>
    </location>
</feature>
<feature type="binding site" evidence="3">
    <location>
        <begin position="43"/>
        <end position="51"/>
    </location>
    <ligand>
        <name>ATP</name>
        <dbReference type="ChEBI" id="CHEBI:30616"/>
    </ligand>
</feature>
<feature type="binding site" evidence="3">
    <location>
        <position position="71"/>
    </location>
    <ligand>
        <name>ATP</name>
        <dbReference type="ChEBI" id="CHEBI:30616"/>
    </ligand>
</feature>
<feature type="modified residue" description="Phosphoserine" evidence="2">
    <location>
        <position position="376"/>
    </location>
</feature>
<feature type="cross-link" description="Glycyl lysine isopeptide (Lys-Gly) (interchain with G-Cter in SUMO2)" evidence="2">
    <location>
        <position position="71"/>
    </location>
</feature>
<keyword id="KW-0067">ATP-binding</keyword>
<keyword id="KW-0131">Cell cycle</keyword>
<keyword id="KW-0132">Cell division</keyword>
<keyword id="KW-0963">Cytoplasm</keyword>
<keyword id="KW-1017">Isopeptide bond</keyword>
<keyword id="KW-0418">Kinase</keyword>
<keyword id="KW-0498">Mitosis</keyword>
<keyword id="KW-0547">Nucleotide-binding</keyword>
<keyword id="KW-0539">Nucleus</keyword>
<keyword id="KW-0597">Phosphoprotein</keyword>
<keyword id="KW-1185">Reference proteome</keyword>
<keyword id="KW-0723">Serine/threonine-protein kinase</keyword>
<keyword id="KW-0808">Transferase</keyword>
<keyword id="KW-0832">Ubl conjugation</keyword>
<comment type="function">
    <text evidence="1 2">Serine/threonine kinase involved in the regulation of key cellular processes including the cell cycle, nuclear condensation, transcription regulation, and DNA damage response (By similarity). Controls chromatin organization and remodeling by mediating phosphorylation of histone H3 on 'Thr-4' and histone H2AX (H2aXT4ph) (By similarity). It also phosphorylates KAT5 in response to DNA damage, promoting KAT5 association with chromatin and histone acetyltransferase activity (By similarity). Is involved in the regulation of cell cycle progression of neural progenitors, and is required for proper cortical neuronal migration (By similarity). Is involved in neurite elongation and branching in motor neurons, and has an essential role in Cajal bodies assembly, acting through COIL phosphorylation and the control of coilin degradation (By similarity). Involved in Golgi disassembly during the cell cycle: following phosphorylation by PLK3 during mitosis, it is required to induce Golgi fragmentation (By similarity). Phosphorylates BANF1: disrupts its ability to bind DNA, reduces its binding to LEM domain-containing proteins and causes its relocalization from the nucleus to the cytoplasm. Phosphorylates TP53BP1 and p53/TP53 on 'Thr-18', preventing the interaction between p53/TP53 and MDM2. Phosphorylates ATF2 which activates its transcriptional activity. Phosphorylates JUN (By similarity).</text>
</comment>
<comment type="catalytic activity">
    <reaction evidence="2">
        <text>L-seryl-[protein] + ATP = O-phospho-L-seryl-[protein] + ADP + H(+)</text>
        <dbReference type="Rhea" id="RHEA:17989"/>
        <dbReference type="Rhea" id="RHEA-COMP:9863"/>
        <dbReference type="Rhea" id="RHEA-COMP:11604"/>
        <dbReference type="ChEBI" id="CHEBI:15378"/>
        <dbReference type="ChEBI" id="CHEBI:29999"/>
        <dbReference type="ChEBI" id="CHEBI:30616"/>
        <dbReference type="ChEBI" id="CHEBI:83421"/>
        <dbReference type="ChEBI" id="CHEBI:456216"/>
        <dbReference type="EC" id="2.7.11.1"/>
    </reaction>
</comment>
<comment type="catalytic activity">
    <reaction evidence="2">
        <text>L-threonyl-[protein] + ATP = O-phospho-L-threonyl-[protein] + ADP + H(+)</text>
        <dbReference type="Rhea" id="RHEA:46608"/>
        <dbReference type="Rhea" id="RHEA-COMP:11060"/>
        <dbReference type="Rhea" id="RHEA-COMP:11605"/>
        <dbReference type="ChEBI" id="CHEBI:15378"/>
        <dbReference type="ChEBI" id="CHEBI:30013"/>
        <dbReference type="ChEBI" id="CHEBI:30616"/>
        <dbReference type="ChEBI" id="CHEBI:61977"/>
        <dbReference type="ChEBI" id="CHEBI:456216"/>
        <dbReference type="EC" id="2.7.11.1"/>
    </reaction>
</comment>
<comment type="activity regulation">
    <text evidence="2">Active in presence of Mn(2+), Mg(2+) and Zn(2+), but is not functional with Ca(2+) or Cu(2+). Has a higher affinity for Mn(2+) than for Mg(2+). RAN inhibits its autophosphorylation and its ability to phosphorylate histone H3 (By similarity).</text>
</comment>
<comment type="subunit">
    <text evidence="2">Interacts with HDAC1, KAT2B, SETDB1, KDM3A and KDM4A (By similarity). Associates with the nucleosome through interactions with nucleosome DNA, histone H2A and histone H2B; the interaction with H2A and H2B is mediated by the nucleosome acidic patch, a cluster of negatively charged residues of H2A and H2B forming a cleft within the nucleosome core.</text>
</comment>
<comment type="subcellular location">
    <subcellularLocation>
        <location evidence="2">Nucleus</location>
    </subcellularLocation>
    <subcellularLocation>
        <location evidence="2">Cytoplasm</location>
    </subcellularLocation>
    <subcellularLocation>
        <location evidence="2">Nucleus</location>
        <location evidence="2">Cajal body</location>
    </subcellularLocation>
    <text evidence="2">Enriched on chromatin during mitotic chromatin condensation.</text>
</comment>
<comment type="PTM">
    <text evidence="2">Autophosphorylated at various serine and threonine residues. Autophosphorylation does not impair its ability to phosphorylate p53/TP53. Phosphorylation by PLK3 leads to induction of Golgi fragmentation during mitosis (By similarity).</text>
</comment>
<comment type="similarity">
    <text evidence="6">Belongs to the protein kinase superfamily. CK1 Ser/Thr protein kinase family. VRK subfamily.</text>
</comment>
<protein>
    <recommendedName>
        <fullName>Serine/threonine-protein kinase VRK1</fullName>
        <ecNumber>2.7.11.1</ecNumber>
    </recommendedName>
    <alternativeName>
        <fullName>Vaccinia-related kinase 1</fullName>
    </alternativeName>
</protein>
<evidence type="ECO:0000250" key="1">
    <source>
        <dbReference type="UniProtKB" id="Q80X41"/>
    </source>
</evidence>
<evidence type="ECO:0000250" key="2">
    <source>
        <dbReference type="UniProtKB" id="Q99986"/>
    </source>
</evidence>
<evidence type="ECO:0000255" key="3">
    <source>
        <dbReference type="PROSITE-ProRule" id="PRU00159"/>
    </source>
</evidence>
<evidence type="ECO:0000255" key="4">
    <source>
        <dbReference type="PROSITE-ProRule" id="PRU10027"/>
    </source>
</evidence>
<evidence type="ECO:0000256" key="5">
    <source>
        <dbReference type="SAM" id="MobiDB-lite"/>
    </source>
</evidence>
<evidence type="ECO:0000305" key="6"/>
<name>VRK1_BOVIN</name>
<proteinExistence type="evidence at transcript level"/>
<gene>
    <name type="primary">VRK1</name>
</gene>
<reference key="1">
    <citation type="journal article" date="2009" name="Genome Biol.">
        <title>A whole-genome assembly of the domestic cow, Bos taurus.</title>
        <authorList>
            <person name="Zimin A.V."/>
            <person name="Delcher A.L."/>
            <person name="Florea L."/>
            <person name="Kelley D.R."/>
            <person name="Schatz M.C."/>
            <person name="Puiu D."/>
            <person name="Hanrahan F."/>
            <person name="Pertea G."/>
            <person name="Van Tassell C.P."/>
            <person name="Sonstegard T.S."/>
            <person name="Marcais G."/>
            <person name="Roberts M."/>
            <person name="Subramanian P."/>
            <person name="Yorke J.A."/>
            <person name="Salzberg S.L."/>
        </authorList>
    </citation>
    <scope>NUCLEOTIDE SEQUENCE [LARGE SCALE GENOMIC DNA]</scope>
    <source>
        <strain>Hereford</strain>
    </source>
</reference>
<reference key="2">
    <citation type="submission" date="2005-10" db="EMBL/GenBank/DDBJ databases">
        <authorList>
            <consortium name="NIH - Mammalian Gene Collection (MGC) project"/>
        </authorList>
    </citation>
    <scope>NUCLEOTIDE SEQUENCE [LARGE SCALE MRNA]</scope>
    <source>
        <strain>Crossbred X Angus</strain>
        <tissue>Ileum</tissue>
    </source>
</reference>
<accession>Q32PI1</accession>
<accession>F1ML67</accession>
<sequence length="396" mass="45358">MPRVKAAQAGRQGPAKRRLAEHFAAGEIITDMNKKEWKLGSPIGQGGFGCIYLADMNSSKSVGNDAPCVVKVEPSDNGPLFTELKFYQRAAKPEQIQKWIRTHKLKYLGVPKYWGSGLHDKNGKSYRFMIIDRFGSDLQKIYEANAKRFSRKTVLQLSLRILDILEYIHEHEYVHGDIKASNLLLSYKNPDQVYLVDYGLAYRYCPEGTHKEYKEDPKRCHDGTVEFTSIDAHNGVAPSRRGDLEILGYCMIQWLSGHLPWEDNLKDPNYVRDSKIRYRENIASLMDKCFPEKNKPDEIAKYMETVKLLDYVEKPLYQKLRDILLQGLKAIGSKDDGKLDLTVVENGSLKAKPVAKKRKKEAEESVESSVEDMECSDKQTEEATQTRSKTRKRVQK</sequence>
<dbReference type="EC" id="2.7.11.1"/>
<dbReference type="EMBL" id="DAAA02053166">
    <property type="status" value="NOT_ANNOTATED_CDS"/>
    <property type="molecule type" value="Genomic_DNA"/>
</dbReference>
<dbReference type="EMBL" id="DAAA02053167">
    <property type="status" value="NOT_ANNOTATED_CDS"/>
    <property type="molecule type" value="Genomic_DNA"/>
</dbReference>
<dbReference type="EMBL" id="BC108107">
    <property type="protein sequence ID" value="AAI08108.1"/>
    <property type="molecule type" value="mRNA"/>
</dbReference>
<dbReference type="RefSeq" id="NP_001033313.1">
    <property type="nucleotide sequence ID" value="NM_001038224.2"/>
</dbReference>
<dbReference type="SMR" id="Q32PI1"/>
<dbReference type="FunCoup" id="Q32PI1">
    <property type="interactions" value="3369"/>
</dbReference>
<dbReference type="STRING" id="9913.ENSBTAP00000066956"/>
<dbReference type="PaxDb" id="9913-ENSBTAP00000018916"/>
<dbReference type="GeneID" id="618880"/>
<dbReference type="KEGG" id="bta:618880"/>
<dbReference type="CTD" id="7443"/>
<dbReference type="VEuPathDB" id="HostDB:ENSBTAG00000014230"/>
<dbReference type="eggNOG" id="KOG1164">
    <property type="taxonomic scope" value="Eukaryota"/>
</dbReference>
<dbReference type="InParanoid" id="Q32PI1"/>
<dbReference type="OrthoDB" id="2687620at2759"/>
<dbReference type="Reactome" id="R-BTA-2980766">
    <property type="pathway name" value="Nuclear Envelope Breakdown"/>
</dbReference>
<dbReference type="Reactome" id="R-BTA-2995383">
    <property type="pathway name" value="Initiation of Nuclear Envelope (NE) Reformation"/>
</dbReference>
<dbReference type="Proteomes" id="UP000009136">
    <property type="component" value="Chromosome 21"/>
</dbReference>
<dbReference type="Bgee" id="ENSBTAG00000014230">
    <property type="expression patterns" value="Expressed in oocyte and 106 other cell types or tissues"/>
</dbReference>
<dbReference type="GO" id="GO:0015030">
    <property type="term" value="C:Cajal body"/>
    <property type="evidence" value="ECO:0000250"/>
    <property type="project" value="UniProtKB"/>
</dbReference>
<dbReference type="GO" id="GO:0000785">
    <property type="term" value="C:chromatin"/>
    <property type="evidence" value="ECO:0000250"/>
    <property type="project" value="UniProtKB"/>
</dbReference>
<dbReference type="GO" id="GO:0005737">
    <property type="term" value="C:cytoplasm"/>
    <property type="evidence" value="ECO:0000318"/>
    <property type="project" value="GO_Central"/>
</dbReference>
<dbReference type="GO" id="GO:0005795">
    <property type="term" value="C:Golgi stack"/>
    <property type="evidence" value="ECO:0000250"/>
    <property type="project" value="UniProtKB"/>
</dbReference>
<dbReference type="GO" id="GO:0005634">
    <property type="term" value="C:nucleus"/>
    <property type="evidence" value="ECO:0000250"/>
    <property type="project" value="AgBase"/>
</dbReference>
<dbReference type="GO" id="GO:0005524">
    <property type="term" value="F:ATP binding"/>
    <property type="evidence" value="ECO:0007669"/>
    <property type="project" value="UniProtKB-KW"/>
</dbReference>
<dbReference type="GO" id="GO:0141003">
    <property type="term" value="F:histone H2AX kinase activity"/>
    <property type="evidence" value="ECO:0000250"/>
    <property type="project" value="UniProtKB"/>
</dbReference>
<dbReference type="GO" id="GO:0031492">
    <property type="term" value="F:nucleosomal DNA binding"/>
    <property type="evidence" value="ECO:0000250"/>
    <property type="project" value="UniProtKB"/>
</dbReference>
<dbReference type="GO" id="GO:0106310">
    <property type="term" value="F:protein serine kinase activity"/>
    <property type="evidence" value="ECO:0007669"/>
    <property type="project" value="RHEA"/>
</dbReference>
<dbReference type="GO" id="GO:0004674">
    <property type="term" value="F:protein serine/threonine kinase activity"/>
    <property type="evidence" value="ECO:0000250"/>
    <property type="project" value="UniProtKB"/>
</dbReference>
<dbReference type="GO" id="GO:0030576">
    <property type="term" value="P:Cajal body organization"/>
    <property type="evidence" value="ECO:0000250"/>
    <property type="project" value="UniProtKB"/>
</dbReference>
<dbReference type="GO" id="GO:0051301">
    <property type="term" value="P:cell division"/>
    <property type="evidence" value="ECO:0007669"/>
    <property type="project" value="UniProtKB-KW"/>
</dbReference>
<dbReference type="GO" id="GO:0006338">
    <property type="term" value="P:chromatin remodeling"/>
    <property type="evidence" value="ECO:0000250"/>
    <property type="project" value="UniProtKB"/>
</dbReference>
<dbReference type="GO" id="GO:0006974">
    <property type="term" value="P:DNA damage response"/>
    <property type="evidence" value="ECO:0000250"/>
    <property type="project" value="UniProtKB"/>
</dbReference>
<dbReference type="GO" id="GO:0090166">
    <property type="term" value="P:Golgi disassembly"/>
    <property type="evidence" value="ECO:0000250"/>
    <property type="project" value="UniProtKB"/>
</dbReference>
<dbReference type="GO" id="GO:0031175">
    <property type="term" value="P:neuron projection development"/>
    <property type="evidence" value="ECO:0000250"/>
    <property type="project" value="UniProtKB"/>
</dbReference>
<dbReference type="GO" id="GO:0120187">
    <property type="term" value="P:positive regulation of protein localization to chromatin"/>
    <property type="evidence" value="ECO:0000250"/>
    <property type="project" value="UniProtKB"/>
</dbReference>
<dbReference type="GO" id="GO:0046777">
    <property type="term" value="P:protein autophosphorylation"/>
    <property type="evidence" value="ECO:0000250"/>
    <property type="project" value="AgBase"/>
</dbReference>
<dbReference type="GO" id="GO:0006468">
    <property type="term" value="P:protein phosphorylation"/>
    <property type="evidence" value="ECO:0000250"/>
    <property type="project" value="AgBase"/>
</dbReference>
<dbReference type="GO" id="GO:2001222">
    <property type="term" value="P:regulation of neuron migration"/>
    <property type="evidence" value="ECO:0000250"/>
    <property type="project" value="UniProtKB"/>
</dbReference>
<dbReference type="GO" id="GO:0007165">
    <property type="term" value="P:signal transduction"/>
    <property type="evidence" value="ECO:0000318"/>
    <property type="project" value="GO_Central"/>
</dbReference>
<dbReference type="CDD" id="cd14122">
    <property type="entry name" value="STKc_VRK1"/>
    <property type="match status" value="1"/>
</dbReference>
<dbReference type="FunFam" id="1.10.510.10:FF:000348">
    <property type="entry name" value="serine/threonine-protein kinase VRK1 isoform X1"/>
    <property type="match status" value="1"/>
</dbReference>
<dbReference type="Gene3D" id="1.10.510.10">
    <property type="entry name" value="Transferase(Phosphotransferase) domain 1"/>
    <property type="match status" value="1"/>
</dbReference>
<dbReference type="InterPro" id="IPR050235">
    <property type="entry name" value="CK1_Ser-Thr_kinase"/>
</dbReference>
<dbReference type="InterPro" id="IPR011009">
    <property type="entry name" value="Kinase-like_dom_sf"/>
</dbReference>
<dbReference type="InterPro" id="IPR000719">
    <property type="entry name" value="Prot_kinase_dom"/>
</dbReference>
<dbReference type="InterPro" id="IPR017441">
    <property type="entry name" value="Protein_kinase_ATP_BS"/>
</dbReference>
<dbReference type="InterPro" id="IPR008271">
    <property type="entry name" value="Ser/Thr_kinase_AS"/>
</dbReference>
<dbReference type="PANTHER" id="PTHR11909">
    <property type="entry name" value="CASEIN KINASE-RELATED"/>
    <property type="match status" value="1"/>
</dbReference>
<dbReference type="Pfam" id="PF00069">
    <property type="entry name" value="Pkinase"/>
    <property type="match status" value="1"/>
</dbReference>
<dbReference type="SMART" id="SM00220">
    <property type="entry name" value="S_TKc"/>
    <property type="match status" value="1"/>
</dbReference>
<dbReference type="SUPFAM" id="SSF56112">
    <property type="entry name" value="Protein kinase-like (PK-like)"/>
    <property type="match status" value="1"/>
</dbReference>
<dbReference type="PROSITE" id="PS00107">
    <property type="entry name" value="PROTEIN_KINASE_ATP"/>
    <property type="match status" value="1"/>
</dbReference>
<dbReference type="PROSITE" id="PS50011">
    <property type="entry name" value="PROTEIN_KINASE_DOM"/>
    <property type="match status" value="1"/>
</dbReference>
<dbReference type="PROSITE" id="PS00108">
    <property type="entry name" value="PROTEIN_KINASE_ST"/>
    <property type="match status" value="1"/>
</dbReference>